<reference key="1">
    <citation type="submission" date="2008-02" db="EMBL/GenBank/DDBJ databases">
        <title>Complete sequence of Escherichia coli C str. ATCC 8739.</title>
        <authorList>
            <person name="Copeland A."/>
            <person name="Lucas S."/>
            <person name="Lapidus A."/>
            <person name="Glavina del Rio T."/>
            <person name="Dalin E."/>
            <person name="Tice H."/>
            <person name="Bruce D."/>
            <person name="Goodwin L."/>
            <person name="Pitluck S."/>
            <person name="Kiss H."/>
            <person name="Brettin T."/>
            <person name="Detter J.C."/>
            <person name="Han C."/>
            <person name="Kuske C.R."/>
            <person name="Schmutz J."/>
            <person name="Larimer F."/>
            <person name="Land M."/>
            <person name="Hauser L."/>
            <person name="Kyrpides N."/>
            <person name="Mikhailova N."/>
            <person name="Ingram L."/>
            <person name="Richardson P."/>
        </authorList>
    </citation>
    <scope>NUCLEOTIDE SEQUENCE [LARGE SCALE GENOMIC DNA]</scope>
    <source>
        <strain>ATCC 8739 / DSM 1576 / NBRC 3972 / NCIMB 8545 / WDCM 00012 / Crooks</strain>
    </source>
</reference>
<sequence>MGLMNAFDSQTEDSSPAIGRNLRSRPLARKKLSEMVEEELEQMIRRREFGEGEQLPSERELMAFFNVGRPSVREALAALKRKGLVQINNGERARVSRPSADTIIGELSGMAKDFLSHPGGIAHFEQLRLFFESSLVRYAAEHATDEQIDLLAKALEINSQSLDNNAAFIRSDVDFHRVLAEIPGNPIFMAIHVALLDWLIAARPTVTDQALHEHNNVSYQQHIAIVDAIRRHDPDEADRALQSHLNSVSATWHAFGQTTNKKK</sequence>
<dbReference type="EMBL" id="CP000946">
    <property type="protein sequence ID" value="ACA76157.1"/>
    <property type="molecule type" value="Genomic_DNA"/>
</dbReference>
<dbReference type="RefSeq" id="WP_000523845.1">
    <property type="nucleotide sequence ID" value="NZ_MTFT01000027.1"/>
</dbReference>
<dbReference type="SMR" id="B1IQQ3"/>
<dbReference type="GeneID" id="75206076"/>
<dbReference type="KEGG" id="ecl:EcolC_0480"/>
<dbReference type="HOGENOM" id="CLU_017584_9_1_6"/>
<dbReference type="GO" id="GO:0003677">
    <property type="term" value="F:DNA binding"/>
    <property type="evidence" value="ECO:0007669"/>
    <property type="project" value="UniProtKB-KW"/>
</dbReference>
<dbReference type="GO" id="GO:0003700">
    <property type="term" value="F:DNA-binding transcription factor activity"/>
    <property type="evidence" value="ECO:0007669"/>
    <property type="project" value="UniProtKB-UniRule"/>
</dbReference>
<dbReference type="GO" id="GO:0045892">
    <property type="term" value="P:negative regulation of DNA-templated transcription"/>
    <property type="evidence" value="ECO:0007669"/>
    <property type="project" value="UniProtKB-UniRule"/>
</dbReference>
<dbReference type="CDD" id="cd07377">
    <property type="entry name" value="WHTH_GntR"/>
    <property type="match status" value="1"/>
</dbReference>
<dbReference type="FunFam" id="1.10.10.10:FF:000150">
    <property type="entry name" value="HTH-type transcriptional repressor NanR"/>
    <property type="match status" value="1"/>
</dbReference>
<dbReference type="FunFam" id="1.20.120.530:FF:000006">
    <property type="entry name" value="HTH-type transcriptional repressor NanR"/>
    <property type="match status" value="1"/>
</dbReference>
<dbReference type="Gene3D" id="1.20.120.530">
    <property type="entry name" value="GntR ligand-binding domain-like"/>
    <property type="match status" value="1"/>
</dbReference>
<dbReference type="Gene3D" id="1.10.10.10">
    <property type="entry name" value="Winged helix-like DNA-binding domain superfamily/Winged helix DNA-binding domain"/>
    <property type="match status" value="1"/>
</dbReference>
<dbReference type="HAMAP" id="MF_01236">
    <property type="entry name" value="HTH_NanR"/>
    <property type="match status" value="1"/>
</dbReference>
<dbReference type="InterPro" id="IPR011711">
    <property type="entry name" value="GntR_C"/>
</dbReference>
<dbReference type="InterPro" id="IPR008920">
    <property type="entry name" value="TF_FadR/GntR_C"/>
</dbReference>
<dbReference type="InterPro" id="IPR000524">
    <property type="entry name" value="Tscrpt_reg_HTH_GntR"/>
</dbReference>
<dbReference type="InterPro" id="IPR023730">
    <property type="entry name" value="Tscrpt_reg_NanR"/>
</dbReference>
<dbReference type="InterPro" id="IPR036388">
    <property type="entry name" value="WH-like_DNA-bd_sf"/>
</dbReference>
<dbReference type="InterPro" id="IPR036390">
    <property type="entry name" value="WH_DNA-bd_sf"/>
</dbReference>
<dbReference type="NCBIfam" id="NF003011">
    <property type="entry name" value="PRK03837.1"/>
    <property type="match status" value="1"/>
</dbReference>
<dbReference type="PANTHER" id="PTHR43537:SF53">
    <property type="entry name" value="HTH-TYPE TRANSCRIPTIONAL REPRESSOR NANR"/>
    <property type="match status" value="1"/>
</dbReference>
<dbReference type="PANTHER" id="PTHR43537">
    <property type="entry name" value="TRANSCRIPTIONAL REGULATOR, GNTR FAMILY"/>
    <property type="match status" value="1"/>
</dbReference>
<dbReference type="Pfam" id="PF07729">
    <property type="entry name" value="FCD"/>
    <property type="match status" value="1"/>
</dbReference>
<dbReference type="Pfam" id="PF00392">
    <property type="entry name" value="GntR"/>
    <property type="match status" value="1"/>
</dbReference>
<dbReference type="PRINTS" id="PR00035">
    <property type="entry name" value="HTHGNTR"/>
</dbReference>
<dbReference type="SMART" id="SM00895">
    <property type="entry name" value="FCD"/>
    <property type="match status" value="1"/>
</dbReference>
<dbReference type="SMART" id="SM00345">
    <property type="entry name" value="HTH_GNTR"/>
    <property type="match status" value="1"/>
</dbReference>
<dbReference type="SUPFAM" id="SSF48008">
    <property type="entry name" value="GntR ligand-binding domain-like"/>
    <property type="match status" value="1"/>
</dbReference>
<dbReference type="SUPFAM" id="SSF46785">
    <property type="entry name" value="Winged helix' DNA-binding domain"/>
    <property type="match status" value="1"/>
</dbReference>
<dbReference type="PROSITE" id="PS50949">
    <property type="entry name" value="HTH_GNTR"/>
    <property type="match status" value="1"/>
</dbReference>
<evidence type="ECO:0000255" key="1">
    <source>
        <dbReference type="HAMAP-Rule" id="MF_01236"/>
    </source>
</evidence>
<evidence type="ECO:0000256" key="2">
    <source>
        <dbReference type="SAM" id="MobiDB-lite"/>
    </source>
</evidence>
<gene>
    <name evidence="1" type="primary">nanR</name>
    <name type="ordered locus">EcolC_0480</name>
</gene>
<comment type="function">
    <text evidence="1">Transcriptional repressor that controls expression of the genes required for the catabolism of sialic acids.</text>
</comment>
<comment type="similarity">
    <text evidence="1">Belongs to the NanR family.</text>
</comment>
<keyword id="KW-0238">DNA-binding</keyword>
<keyword id="KW-0678">Repressor</keyword>
<keyword id="KW-0804">Transcription</keyword>
<keyword id="KW-0805">Transcription regulation</keyword>
<organism>
    <name type="scientific">Escherichia coli (strain ATCC 8739 / DSM 1576 / NBRC 3972 / NCIMB 8545 / WDCM 00012 / Crooks)</name>
    <dbReference type="NCBI Taxonomy" id="481805"/>
    <lineage>
        <taxon>Bacteria</taxon>
        <taxon>Pseudomonadati</taxon>
        <taxon>Pseudomonadota</taxon>
        <taxon>Gammaproteobacteria</taxon>
        <taxon>Enterobacterales</taxon>
        <taxon>Enterobacteriaceae</taxon>
        <taxon>Escherichia</taxon>
    </lineage>
</organism>
<protein>
    <recommendedName>
        <fullName evidence="1">HTH-type transcriptional repressor NanR</fullName>
    </recommendedName>
</protein>
<name>NANR_ECOLC</name>
<proteinExistence type="inferred from homology"/>
<feature type="chain" id="PRO_1000085734" description="HTH-type transcriptional repressor NanR">
    <location>
        <begin position="1"/>
        <end position="263"/>
    </location>
</feature>
<feature type="domain" description="HTH gntR-type" evidence="1">
    <location>
        <begin position="30"/>
        <end position="98"/>
    </location>
</feature>
<feature type="DNA-binding region" description="H-T-H motif" evidence="1">
    <location>
        <begin position="58"/>
        <end position="77"/>
    </location>
</feature>
<feature type="region of interest" description="Disordered" evidence="2">
    <location>
        <begin position="1"/>
        <end position="22"/>
    </location>
</feature>
<accession>B1IQQ3</accession>